<keyword id="KW-0028">Amino-acid biosynthesis</keyword>
<keyword id="KW-0903">Direct protein sequencing</keyword>
<keyword id="KW-0479">Metal-binding</keyword>
<keyword id="KW-0486">Methionine biosynthesis</keyword>
<keyword id="KW-0489">Methyltransferase</keyword>
<keyword id="KW-1185">Reference proteome</keyword>
<keyword id="KW-0677">Repeat</keyword>
<keyword id="KW-0808">Transferase</keyword>
<keyword id="KW-0862">Zinc</keyword>
<gene>
    <name evidence="1" type="primary">metE</name>
    <name type="ordered locus">b3829</name>
    <name type="ordered locus">JW3805</name>
</gene>
<proteinExistence type="evidence at protein level"/>
<name>METE_ECOLI</name>
<protein>
    <recommendedName>
        <fullName evidence="1">5-methyltetrahydropteroyltriglutamate--homocysteine methyltransferase</fullName>
        <ecNumber evidence="1">2.1.1.14</ecNumber>
    </recommendedName>
    <alternativeName>
        <fullName evidence="1">Cobalamin-independent methionine synthase</fullName>
    </alternativeName>
    <alternativeName>
        <fullName evidence="1">Methionine synthase, vitamin-B12 independent isozyme</fullName>
    </alternativeName>
</protein>
<dbReference type="EC" id="2.1.1.14" evidence="1"/>
<dbReference type="EMBL" id="M87625">
    <property type="protein sequence ID" value="AAA23544.1"/>
    <property type="molecule type" value="Genomic_DNA"/>
</dbReference>
<dbReference type="EMBL" id="M87049">
    <property type="protein sequence ID" value="AAA67625.1"/>
    <property type="molecule type" value="Genomic_DNA"/>
</dbReference>
<dbReference type="EMBL" id="U00096">
    <property type="protein sequence ID" value="AAC76832.1"/>
    <property type="molecule type" value="Genomic_DNA"/>
</dbReference>
<dbReference type="EMBL" id="AP009048">
    <property type="protein sequence ID" value="BAE77472.1"/>
    <property type="molecule type" value="Genomic_DNA"/>
</dbReference>
<dbReference type="EMBL" id="J04155">
    <property type="protein sequence ID" value="AAA24160.1"/>
    <property type="molecule type" value="Genomic_DNA"/>
</dbReference>
<dbReference type="PIR" id="F65187">
    <property type="entry name" value="A42863"/>
</dbReference>
<dbReference type="RefSeq" id="NP_418273.1">
    <property type="nucleotide sequence ID" value="NC_000913.3"/>
</dbReference>
<dbReference type="RefSeq" id="WP_000153907.1">
    <property type="nucleotide sequence ID" value="NZ_SSZK01000046.1"/>
</dbReference>
<dbReference type="SMR" id="P25665"/>
<dbReference type="BioGRID" id="4259477">
    <property type="interactions" value="26"/>
</dbReference>
<dbReference type="BioGRID" id="852620">
    <property type="interactions" value="1"/>
</dbReference>
<dbReference type="DIP" id="DIP-6847N"/>
<dbReference type="FunCoup" id="P25665">
    <property type="interactions" value="557"/>
</dbReference>
<dbReference type="IntAct" id="P25665">
    <property type="interactions" value="12"/>
</dbReference>
<dbReference type="STRING" id="511145.b3829"/>
<dbReference type="jPOST" id="P25665"/>
<dbReference type="PaxDb" id="511145-b3829"/>
<dbReference type="EnsemblBacteria" id="AAC76832">
    <property type="protein sequence ID" value="AAC76832"/>
    <property type="gene ID" value="b3829"/>
</dbReference>
<dbReference type="GeneID" id="948323"/>
<dbReference type="KEGG" id="ecj:JW3805"/>
<dbReference type="KEGG" id="eco:b3829"/>
<dbReference type="KEGG" id="ecoc:C3026_20720"/>
<dbReference type="PATRIC" id="fig|1411691.4.peg.2879"/>
<dbReference type="EchoBASE" id="EB0579"/>
<dbReference type="eggNOG" id="COG0620">
    <property type="taxonomic scope" value="Bacteria"/>
</dbReference>
<dbReference type="HOGENOM" id="CLU_013175_0_0_6"/>
<dbReference type="InParanoid" id="P25665"/>
<dbReference type="OMA" id="KVMKGML"/>
<dbReference type="OrthoDB" id="244285at2"/>
<dbReference type="PhylomeDB" id="P25665"/>
<dbReference type="BioCyc" id="EcoCyc:HOMOCYSMET-MONOMER"/>
<dbReference type="BioCyc" id="MetaCyc:HOMOCYSMET-MONOMER"/>
<dbReference type="BRENDA" id="2.1.1.14">
    <property type="organism ID" value="2026"/>
</dbReference>
<dbReference type="UniPathway" id="UPA00051">
    <property type="reaction ID" value="UER00082"/>
</dbReference>
<dbReference type="PRO" id="PR:P25665"/>
<dbReference type="Proteomes" id="UP000000625">
    <property type="component" value="Chromosome"/>
</dbReference>
<dbReference type="GO" id="GO:0005829">
    <property type="term" value="C:cytosol"/>
    <property type="evidence" value="ECO:0000314"/>
    <property type="project" value="EcoCyc"/>
</dbReference>
<dbReference type="GO" id="GO:0003871">
    <property type="term" value="F:5-methyltetrahydropteroyltriglutamate-homocysteine S-methyltransferase activity"/>
    <property type="evidence" value="ECO:0000314"/>
    <property type="project" value="EcoCyc"/>
</dbReference>
<dbReference type="GO" id="GO:0008705">
    <property type="term" value="F:methionine synthase activity"/>
    <property type="evidence" value="ECO:0000314"/>
    <property type="project" value="BHF-UCL"/>
</dbReference>
<dbReference type="GO" id="GO:0008270">
    <property type="term" value="F:zinc ion binding"/>
    <property type="evidence" value="ECO:0007669"/>
    <property type="project" value="InterPro"/>
</dbReference>
<dbReference type="GO" id="GO:0050667">
    <property type="term" value="P:homocysteine metabolic process"/>
    <property type="evidence" value="ECO:0000314"/>
    <property type="project" value="BHF-UCL"/>
</dbReference>
<dbReference type="GO" id="GO:0009086">
    <property type="term" value="P:methionine biosynthetic process"/>
    <property type="evidence" value="ECO:0000314"/>
    <property type="project" value="BHF-UCL"/>
</dbReference>
<dbReference type="GO" id="GO:0032259">
    <property type="term" value="P:methylation"/>
    <property type="evidence" value="ECO:0007669"/>
    <property type="project" value="UniProtKB-KW"/>
</dbReference>
<dbReference type="GO" id="GO:0035999">
    <property type="term" value="P:tetrahydrofolate interconversion"/>
    <property type="evidence" value="ECO:0000314"/>
    <property type="project" value="BHF-UCL"/>
</dbReference>
<dbReference type="CDD" id="cd03311">
    <property type="entry name" value="CIMS_C_terminal_like"/>
    <property type="match status" value="1"/>
</dbReference>
<dbReference type="CDD" id="cd03312">
    <property type="entry name" value="CIMS_N_terminal_like"/>
    <property type="match status" value="1"/>
</dbReference>
<dbReference type="FunFam" id="3.20.20.210:FF:000002">
    <property type="entry name" value="5-methyltetrahydropteroyltriglutamate--homocysteine methyltransferase"/>
    <property type="match status" value="1"/>
</dbReference>
<dbReference type="FunFam" id="3.20.20.210:FF:000003">
    <property type="entry name" value="5-methyltetrahydropteroyltriglutamate--homocysteine methyltransferase"/>
    <property type="match status" value="1"/>
</dbReference>
<dbReference type="Gene3D" id="3.20.20.210">
    <property type="match status" value="2"/>
</dbReference>
<dbReference type="HAMAP" id="MF_00172">
    <property type="entry name" value="Meth_synth"/>
    <property type="match status" value="1"/>
</dbReference>
<dbReference type="InterPro" id="IPR013215">
    <property type="entry name" value="Cbl-indep_Met_Synth_N"/>
</dbReference>
<dbReference type="InterPro" id="IPR006276">
    <property type="entry name" value="Cobalamin-indep_Met_synthase"/>
</dbReference>
<dbReference type="InterPro" id="IPR002629">
    <property type="entry name" value="Met_Synth_C/arc"/>
</dbReference>
<dbReference type="InterPro" id="IPR038071">
    <property type="entry name" value="UROD/MetE-like_sf"/>
</dbReference>
<dbReference type="NCBIfam" id="TIGR01371">
    <property type="entry name" value="met_syn_B12ind"/>
    <property type="match status" value="1"/>
</dbReference>
<dbReference type="NCBIfam" id="NF003556">
    <property type="entry name" value="PRK05222.1"/>
    <property type="match status" value="1"/>
</dbReference>
<dbReference type="PANTHER" id="PTHR30519">
    <property type="entry name" value="5-METHYLTETRAHYDROPTEROYLTRIGLUTAMATE--HOMOCYSTEINE METHYLTRANSFERASE"/>
    <property type="match status" value="1"/>
</dbReference>
<dbReference type="Pfam" id="PF08267">
    <property type="entry name" value="Meth_synt_1"/>
    <property type="match status" value="1"/>
</dbReference>
<dbReference type="Pfam" id="PF01717">
    <property type="entry name" value="Meth_synt_2"/>
    <property type="match status" value="1"/>
</dbReference>
<dbReference type="PIRSF" id="PIRSF000382">
    <property type="entry name" value="MeTrfase_B12_ind"/>
    <property type="match status" value="1"/>
</dbReference>
<dbReference type="SUPFAM" id="SSF51726">
    <property type="entry name" value="UROD/MetE-like"/>
    <property type="match status" value="2"/>
</dbReference>
<comment type="function">
    <text evidence="1">Catalyzes the transfer of a methyl group from 5-methyltetrahydrofolate to homocysteine resulting in methionine formation.</text>
</comment>
<comment type="catalytic activity">
    <reaction evidence="1">
        <text>5-methyltetrahydropteroyltri-L-glutamate + L-homocysteine = tetrahydropteroyltri-L-glutamate + L-methionine</text>
        <dbReference type="Rhea" id="RHEA:21196"/>
        <dbReference type="ChEBI" id="CHEBI:57844"/>
        <dbReference type="ChEBI" id="CHEBI:58140"/>
        <dbReference type="ChEBI" id="CHEBI:58199"/>
        <dbReference type="ChEBI" id="CHEBI:58207"/>
        <dbReference type="EC" id="2.1.1.14"/>
    </reaction>
</comment>
<comment type="cofactor">
    <cofactor evidence="1">
        <name>Zn(2+)</name>
        <dbReference type="ChEBI" id="CHEBI:29105"/>
    </cofactor>
    <text evidence="1">Binds 1 zinc ion per subunit.</text>
</comment>
<comment type="pathway">
    <text evidence="1">Amino-acid biosynthesis; L-methionine biosynthesis via de novo pathway; L-methionine from L-homocysteine (MetE route): step 1/1.</text>
</comment>
<comment type="subunit">
    <text>Monomer.</text>
</comment>
<comment type="interaction">
    <interactant intactId="EBI-551247">
        <id>P25665</id>
    </interactant>
    <interactant intactId="EBI-559573">
        <id>P03018</id>
        <label>uvrD</label>
    </interactant>
    <organismsDiffer>false</organismsDiffer>
    <experiments>2</experiments>
</comment>
<comment type="miscellaneous">
    <text>Has an absolute requirement for a polyglutamylated folate as substrate. Its activity depends on phosphate anions and divalent cations.</text>
</comment>
<comment type="similarity">
    <text evidence="1 5">Belongs to the vitamin-B12 independent methionine synthase family.</text>
</comment>
<accession>P25665</accession>
<accession>Q2M8D4</accession>
<sequence>MTILNHTLGFPRVGLRRELKKAQESYWAGNSTREELLAVGRELRARHWDQQKQAGIDLLPVGDFAWYDHVLTTSLLLGNVPARHQNKDGSVDIDTLFRIGRGRAPTGEPAAAAEMTKWFNTNYHYMVPEFVKGQQFKLTWTQLLDEVDEALALGHKVKPVLLGPVTWLWLGKVKGEQFDRLSLLNDILPVYQQVLAELAKRGIEWVQIDEPALVLELPQAWLDAYKPAYDALQGQVKLLLTTYFEGVTPNLDTITALPVQGLHVDLVHGKDDVAELHKRLPSDWLLSAGLINGRNVWRADLTEKYAQIKDIVGKRDLWVASSCSLLHSPIDLSVETRLDAEVKSWFAFALQKCHELALLRDALNSGDTAALAEWSAPIQARRHSTRVHNPAVEKRLAAITAQDSQRANVYEVRAEAQRARFKLPAWPTTTIGSFPQTTEIRTLRLDFKKGNLDANNYRTGIAEHIKQAIVEQERLGLDVLVHGEAERNDMVEYFGEHLDGFVFTQNGWVQSYGSRCVKPPIVIGDISRPAPITVEWAKYAQSLTDKPVKGMLTGPVTILCWSFPREDVSRETIAKQIALALRDEVADLEAAGIGIIQIDEPALREGLPLRRSDWDAYLQWGVEAFRINAAVAKDDTQIHTHMCYCEFNDIMDSIAALDADVITIETSRSDMELLESFEEFDYPNEIGPGVYDIHSPNVPSVEWIEALLKKAAKRIPAERLWVNPDCGLKTRGWPETRAALANMVQAAQNLRRG</sequence>
<organism>
    <name type="scientific">Escherichia coli (strain K12)</name>
    <dbReference type="NCBI Taxonomy" id="83333"/>
    <lineage>
        <taxon>Bacteria</taxon>
        <taxon>Pseudomonadati</taxon>
        <taxon>Pseudomonadota</taxon>
        <taxon>Gammaproteobacteria</taxon>
        <taxon>Enterobacterales</taxon>
        <taxon>Enterobacteriaceae</taxon>
        <taxon>Escherichia</taxon>
    </lineage>
</organism>
<reference key="1">
    <citation type="journal article" date="1992" name="Biochemistry">
        <title>Comparison of cobalamin-independent and cobalamin-dependent methionine synthases from Escherichia coli: two solutions to the same chemical problem.</title>
        <authorList>
            <person name="Gonzalez J.C."/>
            <person name="Banerjee R.V."/>
            <person name="Huang S."/>
            <person name="Sumner J.S."/>
            <person name="Matthews R.G."/>
        </authorList>
    </citation>
    <scope>NUCLEOTIDE SEQUENCE [GENOMIC DNA]</scope>
    <scope>PARTIAL PROTEIN SEQUENCE</scope>
    <source>
        <strain>K12 / DH5-alpha</strain>
    </source>
</reference>
<reference key="2">
    <citation type="journal article" date="1992" name="Science">
        <title>Analysis of the Escherichia coli genome: DNA sequence of the region from 84.5 to 86.5 minutes.</title>
        <authorList>
            <person name="Daniels D.L."/>
            <person name="Plunkett G. III"/>
            <person name="Burland V.D."/>
            <person name="Blattner F.R."/>
        </authorList>
    </citation>
    <scope>NUCLEOTIDE SEQUENCE [LARGE SCALE GENOMIC DNA]</scope>
    <source>
        <strain>K12 / MG1655 / ATCC 47076</strain>
    </source>
</reference>
<reference key="3">
    <citation type="journal article" date="1993" name="Nucleic Acids Res.">
        <title>Analysis of the Escherichia coli genome. III. DNA sequence of the region from 87.2 to 89.2 minutes.</title>
        <authorList>
            <person name="Plunkett G. III"/>
            <person name="Burland V."/>
            <person name="Daniels D.L."/>
            <person name="Blattner F.R."/>
        </authorList>
    </citation>
    <scope>NUCLEOTIDE SEQUENCE [LARGE SCALE GENOMIC DNA]</scope>
    <scope>SEQUENCE REVISION</scope>
    <source>
        <strain>K12 / MG1655 / ATCC 47076</strain>
    </source>
</reference>
<reference key="4">
    <citation type="journal article" date="1997" name="Science">
        <title>The complete genome sequence of Escherichia coli K-12.</title>
        <authorList>
            <person name="Blattner F.R."/>
            <person name="Plunkett G. III"/>
            <person name="Bloch C.A."/>
            <person name="Perna N.T."/>
            <person name="Burland V."/>
            <person name="Riley M."/>
            <person name="Collado-Vides J."/>
            <person name="Glasner J.D."/>
            <person name="Rode C.K."/>
            <person name="Mayhew G.F."/>
            <person name="Gregor J."/>
            <person name="Davis N.W."/>
            <person name="Kirkpatrick H.A."/>
            <person name="Goeden M.A."/>
            <person name="Rose D.J."/>
            <person name="Mau B."/>
            <person name="Shao Y."/>
        </authorList>
    </citation>
    <scope>NUCLEOTIDE SEQUENCE [LARGE SCALE GENOMIC DNA]</scope>
    <scope>SEQUENCE REVISION TO 604 AND 658</scope>
    <source>
        <strain>K12 / MG1655 / ATCC 47076</strain>
    </source>
</reference>
<reference key="5">
    <citation type="journal article" date="2006" name="Mol. Syst. Biol.">
        <title>Highly accurate genome sequences of Escherichia coli K-12 strains MG1655 and W3110.</title>
        <authorList>
            <person name="Hayashi K."/>
            <person name="Morooka N."/>
            <person name="Yamamoto Y."/>
            <person name="Fujita K."/>
            <person name="Isono K."/>
            <person name="Choi S."/>
            <person name="Ohtsubo E."/>
            <person name="Baba T."/>
            <person name="Wanner B.L."/>
            <person name="Mori H."/>
            <person name="Horiuchi T."/>
        </authorList>
    </citation>
    <scope>NUCLEOTIDE SEQUENCE [LARGE SCALE GENOMIC DNA]</scope>
    <source>
        <strain>K12 / W3110 / ATCC 27325 / DSM 5911</strain>
    </source>
</reference>
<reference key="6">
    <citation type="journal article" date="1989" name="Proc. Natl. Acad. Sci. U.S.A.">
        <title>Regulation of methionine synthesis in Escherichia coli: effect of the MetR protein on the expression of the metE and metR genes.</title>
        <authorList>
            <person name="Maxon M.E."/>
            <person name="Redfield B."/>
            <person name="Cai X.-Y."/>
            <person name="Shoeman R."/>
            <person name="Fujita K."/>
            <person name="Fisher W."/>
            <person name="Stauffer G."/>
            <person name="Weissbach H."/>
            <person name="Brot N."/>
        </authorList>
    </citation>
    <scope>NUCLEOTIDE SEQUENCE [GENOMIC DNA] OF 1-22</scope>
</reference>
<reference key="7">
    <citation type="journal article" date="1997" name="Electrophoresis">
        <title>Comparing the predicted and observed properties of proteins encoded in the genome of Escherichia coli K-12.</title>
        <authorList>
            <person name="Link A.J."/>
            <person name="Robison K."/>
            <person name="Church G.M."/>
        </authorList>
    </citation>
    <scope>PROTEIN SEQUENCE OF 2-13</scope>
    <source>
        <strain>K12 / EMG2</strain>
    </source>
</reference>
<reference key="8">
    <citation type="journal article" date="1996" name="Biochemistry">
        <title>Cobalamin-independent methionine synthase from Escherichia coli: a zinc metalloenzyme.</title>
        <authorList>
            <person name="Gonzalez J.C."/>
            <person name="Peariso K."/>
            <person name="Penner-Hahn J.E."/>
            <person name="Matthews R.G."/>
        </authorList>
    </citation>
    <scope>CHARACTERIZATION</scope>
    <scope>MUTAGENESIS OF CYS-726</scope>
</reference>
<reference key="9">
    <citation type="journal article" date="1997" name="Electrophoresis">
        <title>Escherichia coli proteome analysis using the gene-protein database.</title>
        <authorList>
            <person name="VanBogelen R.A."/>
            <person name="Abshire K.Z."/>
            <person name="Moldover B."/>
            <person name="Olson E.R."/>
            <person name="Neidhardt F.C."/>
        </authorList>
    </citation>
    <scope>IDENTIFICATION BY 2D-GEL</scope>
</reference>
<reference key="10">
    <citation type="journal article" date="1999" name="Biochemistry">
        <title>Identification of the zinc ligands in cobalamin-independent methionine synthase (MetE) from Escherichia coli.</title>
        <authorList>
            <person name="Zhou Z.S."/>
            <person name="Peariso K."/>
            <person name="Penner-Hahn J.E."/>
            <person name="Matthews R.G."/>
        </authorList>
    </citation>
    <scope>MUTAGENESIS OF HIS-641; CYS-643 AND CYS-726</scope>
</reference>
<feature type="initiator methionine" description="Removed" evidence="4">
    <location>
        <position position="1"/>
    </location>
</feature>
<feature type="chain" id="PRO_0000098630" description="5-methyltetrahydropteroyltriglutamate--homocysteine methyltransferase">
    <location>
        <begin position="2"/>
        <end position="753"/>
    </location>
</feature>
<feature type="active site" description="Proton donor" evidence="1">
    <location>
        <position position="694"/>
    </location>
</feature>
<feature type="binding site" evidence="1">
    <location>
        <begin position="17"/>
        <end position="20"/>
    </location>
    <ligand>
        <name>5-methyltetrahydropteroyltri-L-glutamate</name>
        <dbReference type="ChEBI" id="CHEBI:58207"/>
    </ligand>
</feature>
<feature type="binding site" evidence="1">
    <location>
        <position position="117"/>
    </location>
    <ligand>
        <name>5-methyltetrahydropteroyltri-L-glutamate</name>
        <dbReference type="ChEBI" id="CHEBI:58207"/>
    </ligand>
</feature>
<feature type="binding site" evidence="1">
    <location>
        <begin position="431"/>
        <end position="433"/>
    </location>
    <ligand>
        <name>L-homocysteine</name>
        <dbReference type="ChEBI" id="CHEBI:58199"/>
    </ligand>
</feature>
<feature type="binding site" evidence="1">
    <location>
        <begin position="431"/>
        <end position="433"/>
    </location>
    <ligand>
        <name>L-methionine</name>
        <dbReference type="ChEBI" id="CHEBI:57844"/>
    </ligand>
</feature>
<feature type="binding site" evidence="1">
    <location>
        <position position="484"/>
    </location>
    <ligand>
        <name>L-homocysteine</name>
        <dbReference type="ChEBI" id="CHEBI:58199"/>
    </ligand>
</feature>
<feature type="binding site" evidence="1">
    <location>
        <position position="484"/>
    </location>
    <ligand>
        <name>L-methionine</name>
        <dbReference type="ChEBI" id="CHEBI:57844"/>
    </ligand>
</feature>
<feature type="binding site" evidence="1">
    <location>
        <begin position="515"/>
        <end position="516"/>
    </location>
    <ligand>
        <name>5-methyltetrahydropteroyltri-L-glutamate</name>
        <dbReference type="ChEBI" id="CHEBI:58207"/>
    </ligand>
</feature>
<feature type="binding site" evidence="1">
    <location>
        <position position="561"/>
    </location>
    <ligand>
        <name>5-methyltetrahydropteroyltri-L-glutamate</name>
        <dbReference type="ChEBI" id="CHEBI:58207"/>
    </ligand>
</feature>
<feature type="binding site" evidence="1">
    <location>
        <position position="599"/>
    </location>
    <ligand>
        <name>L-homocysteine</name>
        <dbReference type="ChEBI" id="CHEBI:58199"/>
    </ligand>
</feature>
<feature type="binding site" evidence="1">
    <location>
        <position position="599"/>
    </location>
    <ligand>
        <name>L-methionine</name>
        <dbReference type="ChEBI" id="CHEBI:57844"/>
    </ligand>
</feature>
<feature type="binding site" evidence="1">
    <location>
        <position position="605"/>
    </location>
    <ligand>
        <name>5-methyltetrahydropteroyltri-L-glutamate</name>
        <dbReference type="ChEBI" id="CHEBI:58207"/>
    </ligand>
</feature>
<feature type="binding site" evidence="1">
    <location>
        <position position="641"/>
    </location>
    <ligand>
        <name>Zn(2+)</name>
        <dbReference type="ChEBI" id="CHEBI:29105"/>
        <note>catalytic</note>
    </ligand>
</feature>
<feature type="binding site" evidence="1">
    <location>
        <position position="643"/>
    </location>
    <ligand>
        <name>Zn(2+)</name>
        <dbReference type="ChEBI" id="CHEBI:29105"/>
        <note>catalytic</note>
    </ligand>
</feature>
<feature type="binding site" evidence="1">
    <location>
        <position position="665"/>
    </location>
    <ligand>
        <name>Zn(2+)</name>
        <dbReference type="ChEBI" id="CHEBI:29105"/>
        <note>catalytic</note>
    </ligand>
</feature>
<feature type="binding site" evidence="1">
    <location>
        <position position="726"/>
    </location>
    <ligand>
        <name>Zn(2+)</name>
        <dbReference type="ChEBI" id="CHEBI:29105"/>
        <note>catalytic</note>
    </ligand>
</feature>
<feature type="mutagenesis site" description="Impaired activity, lower affinity for zinc binding." evidence="2">
    <original>H</original>
    <variation>N</variation>
    <location>
        <position position="641"/>
    </location>
</feature>
<feature type="mutagenesis site" description="Impaired activity, lower affinity for zinc binding. Binds homocysteine 2-4x more weakly than wild-type." evidence="2">
    <original>H</original>
    <variation>Q</variation>
    <location>
        <position position="641"/>
    </location>
</feature>
<feature type="mutagenesis site" description="Impaired activity, lower affinity for zinc binding. Binds homocysteine 7x tighter than wild-type." evidence="2">
    <original>C</original>
    <variation>S</variation>
    <location>
        <position position="643"/>
    </location>
</feature>
<feature type="mutagenesis site" description="Impaired activity, lower affinity for zinc binding. Binds homocysteine 2-4x more weakly than wild-type." evidence="2 3">
    <original>C</original>
    <variation>S</variation>
    <location>
        <position position="726"/>
    </location>
</feature>
<feature type="sequence conflict" description="In Ref. 1; AAA23544." evidence="5" ref="1">
    <original>L</original>
    <variation>V</variation>
    <location>
        <position position="363"/>
    </location>
</feature>
<feature type="sequence conflict" description="In Ref. 3; AAA67625." evidence="5" ref="3">
    <original>E</original>
    <variation>Q</variation>
    <location>
        <position position="605"/>
    </location>
</feature>
<feature type="sequence conflict" description="In Ref. 3; AAA67625." evidence="5" ref="3">
    <original>A</original>
    <variation>R</variation>
    <location>
        <position position="659"/>
    </location>
</feature>
<evidence type="ECO:0000255" key="1">
    <source>
        <dbReference type="HAMAP-Rule" id="MF_00172"/>
    </source>
</evidence>
<evidence type="ECO:0000269" key="2">
    <source>
    </source>
</evidence>
<evidence type="ECO:0000269" key="3">
    <source>
    </source>
</evidence>
<evidence type="ECO:0000269" key="4">
    <source>
    </source>
</evidence>
<evidence type="ECO:0000305" key="5"/>